<evidence type="ECO:0000255" key="1">
    <source>
        <dbReference type="HAMAP-Rule" id="MF_01347"/>
    </source>
</evidence>
<evidence type="ECO:0000305" key="2"/>
<gene>
    <name evidence="1" type="primary">atpB</name>
</gene>
<comment type="function">
    <text evidence="1">Produces ATP from ADP in the presence of a proton gradient across the membrane. The catalytic sites are hosted primarily by the beta subunits.</text>
</comment>
<comment type="catalytic activity">
    <reaction evidence="1">
        <text>ATP + H2O + 4 H(+)(in) = ADP + phosphate + 5 H(+)(out)</text>
        <dbReference type="Rhea" id="RHEA:57720"/>
        <dbReference type="ChEBI" id="CHEBI:15377"/>
        <dbReference type="ChEBI" id="CHEBI:15378"/>
        <dbReference type="ChEBI" id="CHEBI:30616"/>
        <dbReference type="ChEBI" id="CHEBI:43474"/>
        <dbReference type="ChEBI" id="CHEBI:456216"/>
        <dbReference type="EC" id="7.1.2.2"/>
    </reaction>
</comment>
<comment type="subunit">
    <text evidence="1">F-type ATPases have 2 components, CF(1) - the catalytic core - and CF(0) - the membrane proton channel. CF(1) has five subunits: alpha(3), beta(3), gamma(1), delta(1), epsilon(1). CF(0) has four main subunits: a(1), b(1), b'(1) and c(9-12).</text>
</comment>
<comment type="subcellular location">
    <subcellularLocation>
        <location evidence="1">Plastid</location>
        <location evidence="1">Chloroplast thylakoid membrane</location>
        <topology evidence="1">Peripheral membrane protein</topology>
    </subcellularLocation>
</comment>
<comment type="similarity">
    <text evidence="1">Belongs to the ATPase alpha/beta chains family.</text>
</comment>
<comment type="sequence caution" evidence="2">
    <conflict type="erroneous initiation">
        <sequence resource="EMBL-CDS" id="BAH11286"/>
    </conflict>
</comment>
<organism>
    <name type="scientific">Gnetum parvifolium</name>
    <name type="common">Small-leaved jointfir</name>
    <name type="synonym">Gnetum scandens var. parvifolium</name>
    <dbReference type="NCBI Taxonomy" id="33153"/>
    <lineage>
        <taxon>Eukaryota</taxon>
        <taxon>Viridiplantae</taxon>
        <taxon>Streptophyta</taxon>
        <taxon>Embryophyta</taxon>
        <taxon>Tracheophyta</taxon>
        <taxon>Spermatophyta</taxon>
        <taxon>Gnetopsida</taxon>
        <taxon>Gnetidae</taxon>
        <taxon>Gnetales</taxon>
        <taxon>Gnetaceae</taxon>
        <taxon>Gnetum</taxon>
    </lineage>
</organism>
<keyword id="KW-0066">ATP synthesis</keyword>
<keyword id="KW-0067">ATP-binding</keyword>
<keyword id="KW-0139">CF(1)</keyword>
<keyword id="KW-0150">Chloroplast</keyword>
<keyword id="KW-0375">Hydrogen ion transport</keyword>
<keyword id="KW-0406">Ion transport</keyword>
<keyword id="KW-0472">Membrane</keyword>
<keyword id="KW-0547">Nucleotide-binding</keyword>
<keyword id="KW-0934">Plastid</keyword>
<keyword id="KW-0793">Thylakoid</keyword>
<keyword id="KW-1278">Translocase</keyword>
<keyword id="KW-0813">Transport</keyword>
<reference key="1">
    <citation type="journal article" date="2007" name="Mol. Biol. Evol.">
        <title>Chloroplast genome (cpDNA) of Cycas taitungensis and 56 cp protein-coding genes of Gnetum parvifolium: insights into cpDNA evolution and phylogeny of extant seed plants.</title>
        <authorList>
            <person name="Wu C.-S."/>
            <person name="Wang Y.-N."/>
            <person name="Liu S.-M."/>
            <person name="Chaw S.-M."/>
        </authorList>
    </citation>
    <scope>NUCLEOTIDE SEQUENCE [LARGE SCALE GENOMIC DNA]</scope>
</reference>
<reference key="2">
    <citation type="journal article" date="2009" name="Mol. Phylogenet. Evol.">
        <title>Evolution of reduced and compact chloroplast genomes (cpDNAs) in gnetophytes: Selection toward a lower-cost strategy.</title>
        <authorList>
            <person name="Wu C.-S."/>
            <person name="Lai Y.-T."/>
            <person name="Lin C.-P."/>
            <person name="Wang Y.-N."/>
            <person name="Chaw S.-M."/>
        </authorList>
    </citation>
    <scope>NUCLEOTIDE SEQUENCE [LARGE SCALE GENOMIC DNA]</scope>
</reference>
<name>ATPB_GNEPA</name>
<protein>
    <recommendedName>
        <fullName evidence="1">ATP synthase subunit beta, chloroplastic</fullName>
        <ecNumber evidence="1">7.1.2.2</ecNumber>
    </recommendedName>
    <alternativeName>
        <fullName evidence="1">ATP synthase F1 sector subunit beta</fullName>
    </alternativeName>
    <alternativeName>
        <fullName evidence="1">F-ATPase subunit beta</fullName>
    </alternativeName>
</protein>
<proteinExistence type="inferred from homology"/>
<accession>A6BM09</accession>
<accession>B7ZIA6</accession>
<feature type="chain" id="PRO_0000339620" description="ATP synthase subunit beta, chloroplastic">
    <location>
        <begin position="1"/>
        <end position="482"/>
    </location>
</feature>
<feature type="binding site" evidence="1">
    <location>
        <begin position="168"/>
        <end position="175"/>
    </location>
    <ligand>
        <name>ATP</name>
        <dbReference type="ChEBI" id="CHEBI:30616"/>
    </ligand>
</feature>
<dbReference type="EC" id="7.1.2.2" evidence="1"/>
<dbReference type="EMBL" id="AB295905">
    <property type="protein sequence ID" value="BAF64854.1"/>
    <property type="molecule type" value="Genomic_DNA"/>
</dbReference>
<dbReference type="EMBL" id="AP009569">
    <property type="protein sequence ID" value="BAH11286.1"/>
    <property type="status" value="ALT_INIT"/>
    <property type="molecule type" value="Genomic_DNA"/>
</dbReference>
<dbReference type="RefSeq" id="YP_002519775.1">
    <property type="nucleotide sequence ID" value="NC_011942.1"/>
</dbReference>
<dbReference type="SMR" id="A6BM09"/>
<dbReference type="GeneID" id="7368119"/>
<dbReference type="GO" id="GO:0009535">
    <property type="term" value="C:chloroplast thylakoid membrane"/>
    <property type="evidence" value="ECO:0007669"/>
    <property type="project" value="UniProtKB-SubCell"/>
</dbReference>
<dbReference type="GO" id="GO:0005739">
    <property type="term" value="C:mitochondrion"/>
    <property type="evidence" value="ECO:0007669"/>
    <property type="project" value="GOC"/>
</dbReference>
<dbReference type="GO" id="GO:0045259">
    <property type="term" value="C:proton-transporting ATP synthase complex"/>
    <property type="evidence" value="ECO:0007669"/>
    <property type="project" value="UniProtKB-KW"/>
</dbReference>
<dbReference type="GO" id="GO:0005524">
    <property type="term" value="F:ATP binding"/>
    <property type="evidence" value="ECO:0007669"/>
    <property type="project" value="UniProtKB-UniRule"/>
</dbReference>
<dbReference type="GO" id="GO:0016887">
    <property type="term" value="F:ATP hydrolysis activity"/>
    <property type="evidence" value="ECO:0007669"/>
    <property type="project" value="InterPro"/>
</dbReference>
<dbReference type="GO" id="GO:0046933">
    <property type="term" value="F:proton-transporting ATP synthase activity, rotational mechanism"/>
    <property type="evidence" value="ECO:0007669"/>
    <property type="project" value="UniProtKB-UniRule"/>
</dbReference>
<dbReference type="GO" id="GO:0042776">
    <property type="term" value="P:proton motive force-driven mitochondrial ATP synthesis"/>
    <property type="evidence" value="ECO:0007669"/>
    <property type="project" value="TreeGrafter"/>
</dbReference>
<dbReference type="CDD" id="cd18110">
    <property type="entry name" value="ATP-synt_F1_beta_C"/>
    <property type="match status" value="1"/>
</dbReference>
<dbReference type="CDD" id="cd18115">
    <property type="entry name" value="ATP-synt_F1_beta_N"/>
    <property type="match status" value="1"/>
</dbReference>
<dbReference type="CDD" id="cd01133">
    <property type="entry name" value="F1-ATPase_beta_CD"/>
    <property type="match status" value="1"/>
</dbReference>
<dbReference type="FunFam" id="1.10.1140.10:FF:000001">
    <property type="entry name" value="ATP synthase subunit beta"/>
    <property type="match status" value="1"/>
</dbReference>
<dbReference type="FunFam" id="3.40.50.12240:FF:000006">
    <property type="entry name" value="ATP synthase subunit beta"/>
    <property type="match status" value="1"/>
</dbReference>
<dbReference type="FunFam" id="3.40.50.300:FF:000026">
    <property type="entry name" value="ATP synthase subunit beta"/>
    <property type="match status" value="1"/>
</dbReference>
<dbReference type="FunFam" id="2.40.10.170:FF:000002">
    <property type="entry name" value="ATP synthase subunit beta, chloroplastic"/>
    <property type="match status" value="1"/>
</dbReference>
<dbReference type="Gene3D" id="2.40.10.170">
    <property type="match status" value="1"/>
</dbReference>
<dbReference type="Gene3D" id="1.10.1140.10">
    <property type="entry name" value="Bovine Mitochondrial F1-atpase, Atp Synthase Beta Chain, Chain D, domain 3"/>
    <property type="match status" value="1"/>
</dbReference>
<dbReference type="Gene3D" id="3.40.50.300">
    <property type="entry name" value="P-loop containing nucleotide triphosphate hydrolases"/>
    <property type="match status" value="1"/>
</dbReference>
<dbReference type="HAMAP" id="MF_01347">
    <property type="entry name" value="ATP_synth_beta_bact"/>
    <property type="match status" value="1"/>
</dbReference>
<dbReference type="InterPro" id="IPR003593">
    <property type="entry name" value="AAA+_ATPase"/>
</dbReference>
<dbReference type="InterPro" id="IPR055190">
    <property type="entry name" value="ATP-synt_VA_C"/>
</dbReference>
<dbReference type="InterPro" id="IPR005722">
    <property type="entry name" value="ATP_synth_F1_bsu"/>
</dbReference>
<dbReference type="InterPro" id="IPR020003">
    <property type="entry name" value="ATPase_a/bsu_AS"/>
</dbReference>
<dbReference type="InterPro" id="IPR050053">
    <property type="entry name" value="ATPase_alpha/beta_chains"/>
</dbReference>
<dbReference type="InterPro" id="IPR004100">
    <property type="entry name" value="ATPase_F1/V1/A1_a/bsu_N"/>
</dbReference>
<dbReference type="InterPro" id="IPR036121">
    <property type="entry name" value="ATPase_F1/V1/A1_a/bsu_N_sf"/>
</dbReference>
<dbReference type="InterPro" id="IPR000194">
    <property type="entry name" value="ATPase_F1/V1/A1_a/bsu_nucl-bd"/>
</dbReference>
<dbReference type="InterPro" id="IPR024034">
    <property type="entry name" value="ATPase_F1/V1_b/a_C"/>
</dbReference>
<dbReference type="InterPro" id="IPR027417">
    <property type="entry name" value="P-loop_NTPase"/>
</dbReference>
<dbReference type="NCBIfam" id="TIGR01039">
    <property type="entry name" value="atpD"/>
    <property type="match status" value="1"/>
</dbReference>
<dbReference type="PANTHER" id="PTHR15184">
    <property type="entry name" value="ATP SYNTHASE"/>
    <property type="match status" value="1"/>
</dbReference>
<dbReference type="PANTHER" id="PTHR15184:SF71">
    <property type="entry name" value="ATP SYNTHASE SUBUNIT BETA, MITOCHONDRIAL"/>
    <property type="match status" value="1"/>
</dbReference>
<dbReference type="Pfam" id="PF00006">
    <property type="entry name" value="ATP-synt_ab"/>
    <property type="match status" value="1"/>
</dbReference>
<dbReference type="Pfam" id="PF02874">
    <property type="entry name" value="ATP-synt_ab_N"/>
    <property type="match status" value="1"/>
</dbReference>
<dbReference type="Pfam" id="PF22919">
    <property type="entry name" value="ATP-synt_VA_C"/>
    <property type="match status" value="1"/>
</dbReference>
<dbReference type="SMART" id="SM00382">
    <property type="entry name" value="AAA"/>
    <property type="match status" value="1"/>
</dbReference>
<dbReference type="SUPFAM" id="SSF47917">
    <property type="entry name" value="C-terminal domain of alpha and beta subunits of F1 ATP synthase"/>
    <property type="match status" value="1"/>
</dbReference>
<dbReference type="SUPFAM" id="SSF50615">
    <property type="entry name" value="N-terminal domain of alpha and beta subunits of F1 ATP synthase"/>
    <property type="match status" value="1"/>
</dbReference>
<dbReference type="SUPFAM" id="SSF52540">
    <property type="entry name" value="P-loop containing nucleoside triphosphate hydrolases"/>
    <property type="match status" value="1"/>
</dbReference>
<dbReference type="PROSITE" id="PS00152">
    <property type="entry name" value="ATPASE_ALPHA_BETA"/>
    <property type="match status" value="1"/>
</dbReference>
<geneLocation type="chloroplast"/>
<sequence>MKTKNTFLVSTKSETSIGQITQIIGPVLDVSFPPGNLPNIYNSLIVKGQKDDRAFSVTCEVQQLLGNNTVRAVAMSATDGLTRGMKVINTGACLSVPVGKATLGRIFNVLGEPVDNLGPVDTDTTFPIHRPAPAFPQLDTNLSIFETGIKVVDLLAPYRRGGKIGLFGGAGVGKTVLIMELINNIAKAHGGVSVFGGVGERTREGNDLYMEMKESGVINEKNIAESKVALVYGQMNEPPGARMRVGLTALAMAEYFRDVNEQDVLLFIDNIFRFVQAGSEVSALLGRMPSAVGYQPTLSTEMGSLQERITSTKKGSITSIQAVYVPADDLTDPAPATTFAHLDATTVLSRGLAAKGIYPAVDPLDSTSTMLQPEIVGEQHYEIAQGVKQTLQRYKELQDIIAILGLDELSEEDRLTVARARKIERFLSQPFFVAEVFTGSPGKYVSLIETIRGFQMILSGDLDGLPEQSFYLVGNIDEVISS</sequence>